<evidence type="ECO:0000250" key="1"/>
<evidence type="ECO:0000255" key="2"/>
<evidence type="ECO:0000305" key="3"/>
<reference key="1">
    <citation type="submission" date="2005-09" db="EMBL/GenBank/DDBJ databases">
        <title>Annotation of the Aspergillus terreus NIH2624 genome.</title>
        <authorList>
            <person name="Birren B.W."/>
            <person name="Lander E.S."/>
            <person name="Galagan J.E."/>
            <person name="Nusbaum C."/>
            <person name="Devon K."/>
            <person name="Henn M."/>
            <person name="Ma L.-J."/>
            <person name="Jaffe D.B."/>
            <person name="Butler J."/>
            <person name="Alvarez P."/>
            <person name="Gnerre S."/>
            <person name="Grabherr M."/>
            <person name="Kleber M."/>
            <person name="Mauceli E.W."/>
            <person name="Brockman W."/>
            <person name="Rounsley S."/>
            <person name="Young S.K."/>
            <person name="LaButti K."/>
            <person name="Pushparaj V."/>
            <person name="DeCaprio D."/>
            <person name="Crawford M."/>
            <person name="Koehrsen M."/>
            <person name="Engels R."/>
            <person name="Montgomery P."/>
            <person name="Pearson M."/>
            <person name="Howarth C."/>
            <person name="Larson L."/>
            <person name="Luoma S."/>
            <person name="White J."/>
            <person name="Alvarado L."/>
            <person name="Kodira C.D."/>
            <person name="Zeng Q."/>
            <person name="Oleary S."/>
            <person name="Yandava C."/>
            <person name="Denning D.W."/>
            <person name="Nierman W.C."/>
            <person name="Milne T."/>
            <person name="Madden K."/>
        </authorList>
    </citation>
    <scope>NUCLEOTIDE SEQUENCE [LARGE SCALE GENOMIC DNA]</scope>
    <source>
        <strain>NIH 2624 / FGSC A1156</strain>
    </source>
</reference>
<accession>Q0CEN9</accession>
<feature type="chain" id="PRO_0000320458" description="Mitochondrial thiamine pyrophosphate carrier 1">
    <location>
        <begin position="1"/>
        <end position="320"/>
    </location>
</feature>
<feature type="transmembrane region" description="Helical; Name=1" evidence="2">
    <location>
        <begin position="17"/>
        <end position="35"/>
    </location>
</feature>
<feature type="transmembrane region" description="Helical; Name=2" evidence="2">
    <location>
        <begin position="91"/>
        <end position="107"/>
    </location>
</feature>
<feature type="transmembrane region" description="Helical; Name=3" evidence="2">
    <location>
        <begin position="125"/>
        <end position="145"/>
    </location>
</feature>
<feature type="transmembrane region" description="Helical; Name=4" evidence="2">
    <location>
        <begin position="180"/>
        <end position="197"/>
    </location>
</feature>
<feature type="transmembrane region" description="Helical; Name=5" evidence="2">
    <location>
        <begin position="219"/>
        <end position="239"/>
    </location>
</feature>
<feature type="transmembrane region" description="Helical; Name=6" evidence="2">
    <location>
        <begin position="283"/>
        <end position="300"/>
    </location>
</feature>
<feature type="repeat" description="Solcar 1">
    <location>
        <begin position="12"/>
        <end position="110"/>
    </location>
</feature>
<feature type="repeat" description="Solcar 2">
    <location>
        <begin position="119"/>
        <end position="205"/>
    </location>
</feature>
<feature type="repeat" description="Solcar 3">
    <location>
        <begin position="213"/>
        <end position="308"/>
    </location>
</feature>
<organism>
    <name type="scientific">Aspergillus terreus (strain NIH 2624 / FGSC A1156)</name>
    <dbReference type="NCBI Taxonomy" id="341663"/>
    <lineage>
        <taxon>Eukaryota</taxon>
        <taxon>Fungi</taxon>
        <taxon>Dikarya</taxon>
        <taxon>Ascomycota</taxon>
        <taxon>Pezizomycotina</taxon>
        <taxon>Eurotiomycetes</taxon>
        <taxon>Eurotiomycetidae</taxon>
        <taxon>Eurotiales</taxon>
        <taxon>Aspergillaceae</taxon>
        <taxon>Aspergillus</taxon>
        <taxon>Aspergillus subgen. Circumdati</taxon>
    </lineage>
</organism>
<keyword id="KW-0472">Membrane</keyword>
<keyword id="KW-0496">Mitochondrion</keyword>
<keyword id="KW-0999">Mitochondrion inner membrane</keyword>
<keyword id="KW-1185">Reference proteome</keyword>
<keyword id="KW-0677">Repeat</keyword>
<keyword id="KW-0812">Transmembrane</keyword>
<keyword id="KW-1133">Transmembrane helix</keyword>
<keyword id="KW-0813">Transport</keyword>
<gene>
    <name type="primary">tpc1</name>
    <name type="ORF">ATEG_07845</name>
</gene>
<comment type="function">
    <text evidence="1">Mitochondrial transporter that mediates uptake of thiamine pyrophosphate (ThPP) into mitochondria.</text>
</comment>
<comment type="subcellular location">
    <subcellularLocation>
        <location evidence="1">Mitochondrion inner membrane</location>
        <topology evidence="1">Multi-pass membrane protein</topology>
    </subcellularLocation>
</comment>
<comment type="similarity">
    <text evidence="3">Belongs to the mitochondrial carrier (TC 2.A.29) family.</text>
</comment>
<dbReference type="EMBL" id="CH476604">
    <property type="protein sequence ID" value="EAU32107.1"/>
    <property type="molecule type" value="Genomic_DNA"/>
</dbReference>
<dbReference type="RefSeq" id="XP_001216466.1">
    <property type="nucleotide sequence ID" value="XM_001216466.1"/>
</dbReference>
<dbReference type="SMR" id="Q0CEN9"/>
<dbReference type="STRING" id="341663.Q0CEN9"/>
<dbReference type="EnsemblFungi" id="EAU32107">
    <property type="protein sequence ID" value="EAU32107"/>
    <property type="gene ID" value="ATEG_07845"/>
</dbReference>
<dbReference type="GeneID" id="4323017"/>
<dbReference type="VEuPathDB" id="FungiDB:ATEG_07845"/>
<dbReference type="eggNOG" id="KOG0752">
    <property type="taxonomic scope" value="Eukaryota"/>
</dbReference>
<dbReference type="HOGENOM" id="CLU_015166_10_3_1"/>
<dbReference type="OMA" id="MYVCYGA"/>
<dbReference type="OrthoDB" id="18574at2759"/>
<dbReference type="Proteomes" id="UP000007963">
    <property type="component" value="Unassembled WGS sequence"/>
</dbReference>
<dbReference type="GO" id="GO:0005743">
    <property type="term" value="C:mitochondrial inner membrane"/>
    <property type="evidence" value="ECO:0007669"/>
    <property type="project" value="UniProtKB-SubCell"/>
</dbReference>
<dbReference type="GO" id="GO:0055085">
    <property type="term" value="P:transmembrane transport"/>
    <property type="evidence" value="ECO:0007669"/>
    <property type="project" value="InterPro"/>
</dbReference>
<dbReference type="FunFam" id="1.50.40.10:FF:000011">
    <property type="entry name" value="Mitochondrial thiamine pyrophosphate carrier 1"/>
    <property type="match status" value="1"/>
</dbReference>
<dbReference type="Gene3D" id="1.50.40.10">
    <property type="entry name" value="Mitochondrial carrier domain"/>
    <property type="match status" value="1"/>
</dbReference>
<dbReference type="InterPro" id="IPR002067">
    <property type="entry name" value="Mit_carrier"/>
</dbReference>
<dbReference type="InterPro" id="IPR018108">
    <property type="entry name" value="Mitochondrial_sb/sol_carrier"/>
</dbReference>
<dbReference type="InterPro" id="IPR023395">
    <property type="entry name" value="Mt_carrier_dom_sf"/>
</dbReference>
<dbReference type="PANTHER" id="PTHR24089">
    <property type="entry name" value="SOLUTE CARRIER FAMILY 25"/>
    <property type="match status" value="1"/>
</dbReference>
<dbReference type="Pfam" id="PF00153">
    <property type="entry name" value="Mito_carr"/>
    <property type="match status" value="3"/>
</dbReference>
<dbReference type="PRINTS" id="PR00926">
    <property type="entry name" value="MITOCARRIER"/>
</dbReference>
<dbReference type="SUPFAM" id="SSF103506">
    <property type="entry name" value="Mitochondrial carrier"/>
    <property type="match status" value="1"/>
</dbReference>
<dbReference type="PROSITE" id="PS50920">
    <property type="entry name" value="SOLCAR"/>
    <property type="match status" value="3"/>
</dbReference>
<sequence length="320" mass="34635">MSAGGEHLKDEGTRRQVVLAGGIAGLVSRFCVAPLDVVKIRLQLQIHSLSDPSSHRNVSGPIYKGTISTMRAIIREEGITGLWKGNIPAELMYVCYGGVQFTTYRTTTQALAQLPHRLPQPVESFVAGASAGGLATAATYPLDLLRTRFAAQGTERVYTSLLASVRDIARIEGPAGFFRGCSAAVGQIVPYMGLFFATYESLRPSLATVQDLPFGSGDALAGMIASVLAKTGVFPLDLVRKRLQVQGPTRSRYIHRNIPEYRGVFNTLALILRTQGVRGLYRGLTVSLFKAAPASAVTMWTYEETLRALQAMEVAAQKDE</sequence>
<name>TPC1_ASPTN</name>
<protein>
    <recommendedName>
        <fullName>Mitochondrial thiamine pyrophosphate carrier 1</fullName>
    </recommendedName>
</protein>
<proteinExistence type="inferred from homology"/>